<gene>
    <name evidence="1" type="primary">bchL</name>
    <name type="ordered locus">Rcas_1538</name>
</gene>
<dbReference type="EC" id="1.3.7.7" evidence="1"/>
<dbReference type="EMBL" id="CP000804">
    <property type="protein sequence ID" value="ABU57631.1"/>
    <property type="molecule type" value="Genomic_DNA"/>
</dbReference>
<dbReference type="RefSeq" id="WP_012120059.1">
    <property type="nucleotide sequence ID" value="NC_009767.1"/>
</dbReference>
<dbReference type="SMR" id="A7NJG1"/>
<dbReference type="STRING" id="383372.Rcas_1538"/>
<dbReference type="KEGG" id="rca:Rcas_1538"/>
<dbReference type="eggNOG" id="COG1348">
    <property type="taxonomic scope" value="Bacteria"/>
</dbReference>
<dbReference type="HOGENOM" id="CLU_059373_2_0_0"/>
<dbReference type="OrthoDB" id="9778641at2"/>
<dbReference type="UniPathway" id="UPA00671"/>
<dbReference type="Proteomes" id="UP000000263">
    <property type="component" value="Chromosome"/>
</dbReference>
<dbReference type="GO" id="GO:0051539">
    <property type="term" value="F:4 iron, 4 sulfur cluster binding"/>
    <property type="evidence" value="ECO:0007669"/>
    <property type="project" value="UniProtKB-UniRule"/>
</dbReference>
<dbReference type="GO" id="GO:0005524">
    <property type="term" value="F:ATP binding"/>
    <property type="evidence" value="ECO:0007669"/>
    <property type="project" value="UniProtKB-UniRule"/>
</dbReference>
<dbReference type="GO" id="GO:0046872">
    <property type="term" value="F:metal ion binding"/>
    <property type="evidence" value="ECO:0007669"/>
    <property type="project" value="UniProtKB-KW"/>
</dbReference>
<dbReference type="GO" id="GO:0016730">
    <property type="term" value="F:oxidoreductase activity, acting on iron-sulfur proteins as donors"/>
    <property type="evidence" value="ECO:0007669"/>
    <property type="project" value="InterPro"/>
</dbReference>
<dbReference type="GO" id="GO:0016636">
    <property type="term" value="F:oxidoreductase activity, acting on the CH-CH group of donors, iron-sulfur protein as acceptor"/>
    <property type="evidence" value="ECO:0007669"/>
    <property type="project" value="UniProtKB-UniRule"/>
</dbReference>
<dbReference type="GO" id="GO:0036070">
    <property type="term" value="P:light-independent bacteriochlorophyll biosynthetic process"/>
    <property type="evidence" value="ECO:0007669"/>
    <property type="project" value="UniProtKB-UniRule"/>
</dbReference>
<dbReference type="GO" id="GO:0019685">
    <property type="term" value="P:photosynthesis, dark reaction"/>
    <property type="evidence" value="ECO:0007669"/>
    <property type="project" value="InterPro"/>
</dbReference>
<dbReference type="Gene3D" id="3.40.50.300">
    <property type="entry name" value="P-loop containing nucleotide triphosphate hydrolases"/>
    <property type="match status" value="1"/>
</dbReference>
<dbReference type="HAMAP" id="MF_00355">
    <property type="entry name" value="ChlL_BchL"/>
    <property type="match status" value="1"/>
</dbReference>
<dbReference type="InterPro" id="IPR030655">
    <property type="entry name" value="NifH/chlL_CS"/>
</dbReference>
<dbReference type="InterPro" id="IPR000392">
    <property type="entry name" value="NifH/frxC"/>
</dbReference>
<dbReference type="InterPro" id="IPR027417">
    <property type="entry name" value="P-loop_NTPase"/>
</dbReference>
<dbReference type="InterPro" id="IPR005971">
    <property type="entry name" value="Protochlorophyllide_ATP-bd"/>
</dbReference>
<dbReference type="NCBIfam" id="TIGR01281">
    <property type="entry name" value="DPOR_bchL"/>
    <property type="match status" value="1"/>
</dbReference>
<dbReference type="PANTHER" id="PTHR42864">
    <property type="entry name" value="LIGHT-INDEPENDENT PROTOCHLOROPHYLLIDE REDUCTASE IRON-SULFUR ATP-BINDING PROTEIN"/>
    <property type="match status" value="1"/>
</dbReference>
<dbReference type="PANTHER" id="PTHR42864:SF2">
    <property type="entry name" value="LIGHT-INDEPENDENT PROTOCHLOROPHYLLIDE REDUCTASE IRON-SULFUR ATP-BINDING PROTEIN"/>
    <property type="match status" value="1"/>
</dbReference>
<dbReference type="Pfam" id="PF00142">
    <property type="entry name" value="Fer4_NifH"/>
    <property type="match status" value="1"/>
</dbReference>
<dbReference type="PIRSF" id="PIRSF000363">
    <property type="entry name" value="Nitrogenase_iron"/>
    <property type="match status" value="1"/>
</dbReference>
<dbReference type="PRINTS" id="PR00091">
    <property type="entry name" value="NITROGNASEII"/>
</dbReference>
<dbReference type="SUPFAM" id="SSF52540">
    <property type="entry name" value="P-loop containing nucleoside triphosphate hydrolases"/>
    <property type="match status" value="1"/>
</dbReference>
<dbReference type="PROSITE" id="PS00746">
    <property type="entry name" value="NIFH_FRXC_1"/>
    <property type="match status" value="1"/>
</dbReference>
<dbReference type="PROSITE" id="PS00692">
    <property type="entry name" value="NIFH_FRXC_2"/>
    <property type="match status" value="1"/>
</dbReference>
<dbReference type="PROSITE" id="PS51026">
    <property type="entry name" value="NIFH_FRXC_3"/>
    <property type="match status" value="1"/>
</dbReference>
<organism>
    <name type="scientific">Roseiflexus castenholzii (strain DSM 13941 / HLO8)</name>
    <dbReference type="NCBI Taxonomy" id="383372"/>
    <lineage>
        <taxon>Bacteria</taxon>
        <taxon>Bacillati</taxon>
        <taxon>Chloroflexota</taxon>
        <taxon>Chloroflexia</taxon>
        <taxon>Chloroflexales</taxon>
        <taxon>Roseiflexineae</taxon>
        <taxon>Roseiflexaceae</taxon>
        <taxon>Roseiflexus</taxon>
    </lineage>
</organism>
<accession>A7NJG1</accession>
<evidence type="ECO:0000255" key="1">
    <source>
        <dbReference type="HAMAP-Rule" id="MF_00355"/>
    </source>
</evidence>
<name>BCHL_ROSCS</name>
<keyword id="KW-0004">4Fe-4S</keyword>
<keyword id="KW-0067">ATP-binding</keyword>
<keyword id="KW-0077">Bacteriochlorophyll biosynthesis</keyword>
<keyword id="KW-0149">Chlorophyll biosynthesis</keyword>
<keyword id="KW-0408">Iron</keyword>
<keyword id="KW-0411">Iron-sulfur</keyword>
<keyword id="KW-0460">Magnesium</keyword>
<keyword id="KW-0479">Metal-binding</keyword>
<keyword id="KW-0547">Nucleotide-binding</keyword>
<keyword id="KW-0560">Oxidoreductase</keyword>
<keyword id="KW-0602">Photosynthesis</keyword>
<keyword id="KW-1185">Reference proteome</keyword>
<feature type="chain" id="PRO_1000079389" description="Light-independent protochlorophyllide reductase iron-sulfur ATP-binding protein">
    <location>
        <begin position="1"/>
        <end position="273"/>
    </location>
</feature>
<feature type="binding site" evidence="1">
    <location>
        <begin position="12"/>
        <end position="17"/>
    </location>
    <ligand>
        <name>ATP</name>
        <dbReference type="ChEBI" id="CHEBI:30616"/>
    </ligand>
</feature>
<feature type="binding site" evidence="1">
    <location>
        <position position="16"/>
    </location>
    <ligand>
        <name>Mg(2+)</name>
        <dbReference type="ChEBI" id="CHEBI:18420"/>
    </ligand>
</feature>
<feature type="binding site" evidence="1">
    <location>
        <position position="41"/>
    </location>
    <ligand>
        <name>ATP</name>
        <dbReference type="ChEBI" id="CHEBI:30616"/>
    </ligand>
</feature>
<feature type="binding site" evidence="1">
    <location>
        <position position="97"/>
    </location>
    <ligand>
        <name>[4Fe-4S] cluster</name>
        <dbReference type="ChEBI" id="CHEBI:49883"/>
        <note>ligand shared between dimeric partners</note>
    </ligand>
</feature>
<feature type="binding site" evidence="1">
    <location>
        <position position="131"/>
    </location>
    <ligand>
        <name>[4Fe-4S] cluster</name>
        <dbReference type="ChEBI" id="CHEBI:49883"/>
        <note>ligand shared between dimeric partners</note>
    </ligand>
</feature>
<feature type="binding site" evidence="1">
    <location>
        <begin position="182"/>
        <end position="183"/>
    </location>
    <ligand>
        <name>ATP</name>
        <dbReference type="ChEBI" id="CHEBI:30616"/>
    </ligand>
</feature>
<proteinExistence type="inferred from homology"/>
<protein>
    <recommendedName>
        <fullName evidence="1">Light-independent protochlorophyllide reductase iron-sulfur ATP-binding protein</fullName>
        <shortName evidence="1">DPOR subunit L</shortName>
        <shortName evidence="1">LI-POR subunit L</shortName>
        <ecNumber evidence="1">1.3.7.7</ecNumber>
    </recommendedName>
</protein>
<comment type="function">
    <text evidence="1">Component of the dark-operative protochlorophyllide reductase (DPOR) that uses Mg-ATP and reduced ferredoxin to reduce ring D of protochlorophyllide (Pchlide) to form chlorophyllide a (Chlide). This reaction is light-independent. The L component serves as a unique electron donor to the NB-component of the complex, and binds Mg-ATP.</text>
</comment>
<comment type="catalytic activity">
    <reaction evidence="1">
        <text>chlorophyllide a + oxidized 2[4Fe-4S]-[ferredoxin] + 2 ADP + 2 phosphate = protochlorophyllide a + reduced 2[4Fe-4S]-[ferredoxin] + 2 ATP + 2 H2O</text>
        <dbReference type="Rhea" id="RHEA:28202"/>
        <dbReference type="Rhea" id="RHEA-COMP:10002"/>
        <dbReference type="Rhea" id="RHEA-COMP:10004"/>
        <dbReference type="ChEBI" id="CHEBI:15377"/>
        <dbReference type="ChEBI" id="CHEBI:30616"/>
        <dbReference type="ChEBI" id="CHEBI:33722"/>
        <dbReference type="ChEBI" id="CHEBI:33723"/>
        <dbReference type="ChEBI" id="CHEBI:43474"/>
        <dbReference type="ChEBI" id="CHEBI:83348"/>
        <dbReference type="ChEBI" id="CHEBI:83350"/>
        <dbReference type="ChEBI" id="CHEBI:456216"/>
        <dbReference type="EC" id="1.3.7.7"/>
    </reaction>
</comment>
<comment type="cofactor">
    <cofactor evidence="1">
        <name>[4Fe-4S] cluster</name>
        <dbReference type="ChEBI" id="CHEBI:49883"/>
    </cofactor>
    <text evidence="1">Binds 1 [4Fe-4S] cluster per dimer.</text>
</comment>
<comment type="pathway">
    <text evidence="1">Porphyrin-containing compound metabolism; bacteriochlorophyll biosynthesis (light-independent).</text>
</comment>
<comment type="subunit">
    <text evidence="1">Homodimer. Protochlorophyllide reductase is composed of three subunits; BchL, BchN and BchB.</text>
</comment>
<comment type="similarity">
    <text evidence="1">Belongs to the NifH/BchL/ChlL family.</text>
</comment>
<reference key="1">
    <citation type="submission" date="2007-08" db="EMBL/GenBank/DDBJ databases">
        <title>Complete sequence of Roseiflexus castenholzii DSM 13941.</title>
        <authorList>
            <consortium name="US DOE Joint Genome Institute"/>
            <person name="Copeland A."/>
            <person name="Lucas S."/>
            <person name="Lapidus A."/>
            <person name="Barry K."/>
            <person name="Glavina del Rio T."/>
            <person name="Dalin E."/>
            <person name="Tice H."/>
            <person name="Pitluck S."/>
            <person name="Thompson L.S."/>
            <person name="Brettin T."/>
            <person name="Bruce D."/>
            <person name="Detter J.C."/>
            <person name="Han C."/>
            <person name="Tapia R."/>
            <person name="Schmutz J."/>
            <person name="Larimer F."/>
            <person name="Land M."/>
            <person name="Hauser L."/>
            <person name="Kyrpides N."/>
            <person name="Mikhailova N."/>
            <person name="Bryant D.A."/>
            <person name="Hanada S."/>
            <person name="Tsukatani Y."/>
            <person name="Richardson P."/>
        </authorList>
    </citation>
    <scope>NUCLEOTIDE SEQUENCE [LARGE SCALE GENOMIC DNA]</scope>
    <source>
        <strain>DSM 13941 / HLO8</strain>
    </source>
</reference>
<sequence>MSLTLAIYGKGGIGKSTTSSNLSAALALKGAKVLQIGCDPKHDSTFALTGMLQPTVIDVLTEVDFHHEEVSVEDVVHTGFAGVDTLESGGPPAGSGCGGYVVGETVKLLHEFGLYDKYDVIVFDVLGDVVCGGFSAPLNYADYGVIIACNDFDSIFAANRLCLAIKQKSARYRVELAGIIANRVDYELGGGTTLLEQFAETVGTQIIGRVPYHDLIRRSRLMGKTLFEMEGPGKEECTTPFLEMAEYLLNRPRSTVPKPMGDREIFNVIGGWR</sequence>